<dbReference type="EC" id="4.2.1.49" evidence="1"/>
<dbReference type="EMBL" id="CP000886">
    <property type="protein sequence ID" value="ABX68107.1"/>
    <property type="molecule type" value="Genomic_DNA"/>
</dbReference>
<dbReference type="RefSeq" id="WP_001115217.1">
    <property type="nucleotide sequence ID" value="NC_010102.1"/>
</dbReference>
<dbReference type="SMR" id="A9MTJ2"/>
<dbReference type="KEGG" id="spq:SPAB_02729"/>
<dbReference type="PATRIC" id="fig|1016998.12.peg.2582"/>
<dbReference type="HOGENOM" id="CLU_018868_0_1_6"/>
<dbReference type="BioCyc" id="SENT1016998:SPAB_RS11090-MONOMER"/>
<dbReference type="UniPathway" id="UPA00379">
    <property type="reaction ID" value="UER00550"/>
</dbReference>
<dbReference type="Proteomes" id="UP000008556">
    <property type="component" value="Chromosome"/>
</dbReference>
<dbReference type="GO" id="GO:0005737">
    <property type="term" value="C:cytoplasm"/>
    <property type="evidence" value="ECO:0007669"/>
    <property type="project" value="UniProtKB-SubCell"/>
</dbReference>
<dbReference type="GO" id="GO:0016153">
    <property type="term" value="F:urocanate hydratase activity"/>
    <property type="evidence" value="ECO:0007669"/>
    <property type="project" value="UniProtKB-UniRule"/>
</dbReference>
<dbReference type="GO" id="GO:0019556">
    <property type="term" value="P:L-histidine catabolic process to glutamate and formamide"/>
    <property type="evidence" value="ECO:0007669"/>
    <property type="project" value="UniProtKB-UniPathway"/>
</dbReference>
<dbReference type="GO" id="GO:0019557">
    <property type="term" value="P:L-histidine catabolic process to glutamate and formate"/>
    <property type="evidence" value="ECO:0007669"/>
    <property type="project" value="UniProtKB-UniPathway"/>
</dbReference>
<dbReference type="FunFam" id="3.40.50.10730:FF:000001">
    <property type="entry name" value="Urocanate hydratase"/>
    <property type="match status" value="1"/>
</dbReference>
<dbReference type="Gene3D" id="3.40.50.10730">
    <property type="entry name" value="Urocanase like domains"/>
    <property type="match status" value="1"/>
</dbReference>
<dbReference type="Gene3D" id="3.40.1770.10">
    <property type="entry name" value="Urocanase superfamily"/>
    <property type="match status" value="1"/>
</dbReference>
<dbReference type="HAMAP" id="MF_00577">
    <property type="entry name" value="HutU"/>
    <property type="match status" value="1"/>
</dbReference>
<dbReference type="InterPro" id="IPR055351">
    <property type="entry name" value="Urocanase"/>
</dbReference>
<dbReference type="InterPro" id="IPR023637">
    <property type="entry name" value="Urocanase-like"/>
</dbReference>
<dbReference type="InterPro" id="IPR035401">
    <property type="entry name" value="Urocanase_C"/>
</dbReference>
<dbReference type="InterPro" id="IPR038364">
    <property type="entry name" value="Urocanase_central_sf"/>
</dbReference>
<dbReference type="InterPro" id="IPR023636">
    <property type="entry name" value="Urocanase_CS"/>
</dbReference>
<dbReference type="InterPro" id="IPR035400">
    <property type="entry name" value="Urocanase_N"/>
</dbReference>
<dbReference type="InterPro" id="IPR035085">
    <property type="entry name" value="Urocanase_Rossmann-like"/>
</dbReference>
<dbReference type="InterPro" id="IPR036190">
    <property type="entry name" value="Urocanase_sf"/>
</dbReference>
<dbReference type="NCBIfam" id="TIGR01228">
    <property type="entry name" value="hutU"/>
    <property type="match status" value="1"/>
</dbReference>
<dbReference type="NCBIfam" id="NF003820">
    <property type="entry name" value="PRK05414.1"/>
    <property type="match status" value="1"/>
</dbReference>
<dbReference type="PANTHER" id="PTHR12216">
    <property type="entry name" value="UROCANATE HYDRATASE"/>
    <property type="match status" value="1"/>
</dbReference>
<dbReference type="PANTHER" id="PTHR12216:SF4">
    <property type="entry name" value="UROCANATE HYDRATASE"/>
    <property type="match status" value="1"/>
</dbReference>
<dbReference type="Pfam" id="PF01175">
    <property type="entry name" value="Urocanase"/>
    <property type="match status" value="1"/>
</dbReference>
<dbReference type="Pfam" id="PF17392">
    <property type="entry name" value="Urocanase_C"/>
    <property type="match status" value="1"/>
</dbReference>
<dbReference type="Pfam" id="PF17391">
    <property type="entry name" value="Urocanase_N"/>
    <property type="match status" value="1"/>
</dbReference>
<dbReference type="PIRSF" id="PIRSF001423">
    <property type="entry name" value="Urocanate_hydrat"/>
    <property type="match status" value="1"/>
</dbReference>
<dbReference type="SUPFAM" id="SSF111326">
    <property type="entry name" value="Urocanase"/>
    <property type="match status" value="1"/>
</dbReference>
<dbReference type="PROSITE" id="PS01233">
    <property type="entry name" value="UROCANASE"/>
    <property type="match status" value="1"/>
</dbReference>
<protein>
    <recommendedName>
        <fullName evidence="1">Urocanate hydratase</fullName>
        <shortName evidence="1">Urocanase</shortName>
        <ecNumber evidence="1">4.2.1.49</ecNumber>
    </recommendedName>
    <alternativeName>
        <fullName evidence="1">Imidazolonepropionate hydrolase</fullName>
    </alternativeName>
</protein>
<sequence length="561" mass="61466">MPESKYRQQTIRAPRGTVLTAKSWLTEAPLRMLMNNLDPDVAENPHELVVYGGIGRAARNWECYDAIVDALTRLEADETLLIQSGKPVGVFKTHDNAPRVLIANSNLVPHWATWEHFNELDAKGLAMYGQMTAGSWIYIGSQGIVQGTYETFVEAGRQHYNGTLAGRWVLTAGLGGMGGAQPLAATLAGACSLTIECQQSRIDFRLRTRYVDEQAATLDDALARITRYTREGKAVSVALCANAADILPELVNRGVRPDLVTDQTSAHDPLHGYLPSGWRWEEYQKNAQSDPHGTMQAAKRSMAAHVRAMLAFSQMGVPTFDYGNNIRQMAKEMGVENAFDFPGFVPAYIRPLFCRGIGPFRWVALSGDPQDIYKTDAKVKEIVAEDKHLHHWLDMARERIHFQGLPARICWVGLEWRQKLGLAFNEMVRCGEVSAPIVIGRDHLDSGSVASPNRETEAMRDGSDAVSDWPLLNALLNTASGATWVSLHHGGGVGMGFSQHAGMVIVCDGTDEAAARIRRVLHNDPATGVMRHADAGYDLAVECAVEQGLNLPMVAATQGKG</sequence>
<comment type="function">
    <text evidence="1">Catalyzes the conversion of urocanate to 4-imidazolone-5-propionate.</text>
</comment>
<comment type="catalytic activity">
    <reaction evidence="1">
        <text>4-imidazolone-5-propanoate = trans-urocanate + H2O</text>
        <dbReference type="Rhea" id="RHEA:13101"/>
        <dbReference type="ChEBI" id="CHEBI:15377"/>
        <dbReference type="ChEBI" id="CHEBI:17771"/>
        <dbReference type="ChEBI" id="CHEBI:77893"/>
        <dbReference type="EC" id="4.2.1.49"/>
    </reaction>
</comment>
<comment type="cofactor">
    <cofactor evidence="1">
        <name>NAD(+)</name>
        <dbReference type="ChEBI" id="CHEBI:57540"/>
    </cofactor>
    <text evidence="1">Binds 1 NAD(+) per subunit.</text>
</comment>
<comment type="pathway">
    <text evidence="1">Amino-acid degradation; L-histidine degradation into L-glutamate; N-formimidoyl-L-glutamate from L-histidine: step 2/3.</text>
</comment>
<comment type="subcellular location">
    <subcellularLocation>
        <location evidence="1">Cytoplasm</location>
    </subcellularLocation>
</comment>
<comment type="similarity">
    <text evidence="1">Belongs to the urocanase family.</text>
</comment>
<gene>
    <name evidence="1" type="primary">hutU</name>
    <name type="ordered locus">SPAB_02729</name>
</gene>
<name>HUTU_SALPB</name>
<reference key="1">
    <citation type="submission" date="2007-11" db="EMBL/GenBank/DDBJ databases">
        <authorList>
            <consortium name="The Salmonella enterica serovar Paratyphi B Genome Sequencing Project"/>
            <person name="McClelland M."/>
            <person name="Sanderson E.K."/>
            <person name="Porwollik S."/>
            <person name="Spieth J."/>
            <person name="Clifton W.S."/>
            <person name="Fulton R."/>
            <person name="Cordes M."/>
            <person name="Wollam A."/>
            <person name="Shah N."/>
            <person name="Pepin K."/>
            <person name="Bhonagiri V."/>
            <person name="Nash W."/>
            <person name="Johnson M."/>
            <person name="Thiruvilangam P."/>
            <person name="Wilson R."/>
        </authorList>
    </citation>
    <scope>NUCLEOTIDE SEQUENCE [LARGE SCALE GENOMIC DNA]</scope>
    <source>
        <strain>ATCC BAA-1250 / SPB7</strain>
    </source>
</reference>
<accession>A9MTJ2</accession>
<organism>
    <name type="scientific">Salmonella paratyphi B (strain ATCC BAA-1250 / SPB7)</name>
    <dbReference type="NCBI Taxonomy" id="1016998"/>
    <lineage>
        <taxon>Bacteria</taxon>
        <taxon>Pseudomonadati</taxon>
        <taxon>Pseudomonadota</taxon>
        <taxon>Gammaproteobacteria</taxon>
        <taxon>Enterobacterales</taxon>
        <taxon>Enterobacteriaceae</taxon>
        <taxon>Salmonella</taxon>
    </lineage>
</organism>
<evidence type="ECO:0000255" key="1">
    <source>
        <dbReference type="HAMAP-Rule" id="MF_00577"/>
    </source>
</evidence>
<keyword id="KW-0963">Cytoplasm</keyword>
<keyword id="KW-0369">Histidine metabolism</keyword>
<keyword id="KW-0456">Lyase</keyword>
<keyword id="KW-0520">NAD</keyword>
<proteinExistence type="inferred from homology"/>
<feature type="chain" id="PRO_1000082353" description="Urocanate hydratase">
    <location>
        <begin position="1"/>
        <end position="561"/>
    </location>
</feature>
<feature type="active site" evidence="1">
    <location>
        <position position="410"/>
    </location>
</feature>
<feature type="binding site" evidence="1">
    <location>
        <begin position="52"/>
        <end position="53"/>
    </location>
    <ligand>
        <name>NAD(+)</name>
        <dbReference type="ChEBI" id="CHEBI:57540"/>
    </ligand>
</feature>
<feature type="binding site" evidence="1">
    <location>
        <position position="130"/>
    </location>
    <ligand>
        <name>NAD(+)</name>
        <dbReference type="ChEBI" id="CHEBI:57540"/>
    </ligand>
</feature>
<feature type="binding site" evidence="1">
    <location>
        <begin position="176"/>
        <end position="178"/>
    </location>
    <ligand>
        <name>NAD(+)</name>
        <dbReference type="ChEBI" id="CHEBI:57540"/>
    </ligand>
</feature>
<feature type="binding site" evidence="1">
    <location>
        <position position="196"/>
    </location>
    <ligand>
        <name>NAD(+)</name>
        <dbReference type="ChEBI" id="CHEBI:57540"/>
    </ligand>
</feature>
<feature type="binding site" evidence="1">
    <location>
        <position position="201"/>
    </location>
    <ligand>
        <name>NAD(+)</name>
        <dbReference type="ChEBI" id="CHEBI:57540"/>
    </ligand>
</feature>
<feature type="binding site" evidence="1">
    <location>
        <begin position="242"/>
        <end position="243"/>
    </location>
    <ligand>
        <name>NAD(+)</name>
        <dbReference type="ChEBI" id="CHEBI:57540"/>
    </ligand>
</feature>
<feature type="binding site" evidence="1">
    <location>
        <begin position="263"/>
        <end position="267"/>
    </location>
    <ligand>
        <name>NAD(+)</name>
        <dbReference type="ChEBI" id="CHEBI:57540"/>
    </ligand>
</feature>
<feature type="binding site" evidence="1">
    <location>
        <begin position="273"/>
        <end position="274"/>
    </location>
    <ligand>
        <name>NAD(+)</name>
        <dbReference type="ChEBI" id="CHEBI:57540"/>
    </ligand>
</feature>
<feature type="binding site" evidence="1">
    <location>
        <position position="322"/>
    </location>
    <ligand>
        <name>NAD(+)</name>
        <dbReference type="ChEBI" id="CHEBI:57540"/>
    </ligand>
</feature>
<feature type="binding site" evidence="1">
    <location>
        <position position="492"/>
    </location>
    <ligand>
        <name>NAD(+)</name>
        <dbReference type="ChEBI" id="CHEBI:57540"/>
    </ligand>
</feature>